<organism>
    <name type="scientific">Shewanella baltica (strain OS223)</name>
    <dbReference type="NCBI Taxonomy" id="407976"/>
    <lineage>
        <taxon>Bacteria</taxon>
        <taxon>Pseudomonadati</taxon>
        <taxon>Pseudomonadota</taxon>
        <taxon>Gammaproteobacteria</taxon>
        <taxon>Alteromonadales</taxon>
        <taxon>Shewanellaceae</taxon>
        <taxon>Shewanella</taxon>
    </lineage>
</organism>
<accession>B8E749</accession>
<gene>
    <name type="ordered locus">Sbal223_1817</name>
</gene>
<proteinExistence type="inferred from homology"/>
<feature type="chain" id="PRO_1000191568" description="Nucleoid-associated protein Sbal223_1817">
    <location>
        <begin position="1"/>
        <end position="342"/>
    </location>
</feature>
<keyword id="KW-0963">Cytoplasm</keyword>
<dbReference type="EMBL" id="CP001252">
    <property type="protein sequence ID" value="ACK46322.1"/>
    <property type="molecule type" value="Genomic_DNA"/>
</dbReference>
<dbReference type="SMR" id="B8E749"/>
<dbReference type="KEGG" id="sbp:Sbal223_1817"/>
<dbReference type="HOGENOM" id="CLU_063050_0_1_6"/>
<dbReference type="Proteomes" id="UP000002507">
    <property type="component" value="Chromosome"/>
</dbReference>
<dbReference type="GO" id="GO:0043590">
    <property type="term" value="C:bacterial nucleoid"/>
    <property type="evidence" value="ECO:0007669"/>
    <property type="project" value="TreeGrafter"/>
</dbReference>
<dbReference type="GO" id="GO:0005737">
    <property type="term" value="C:cytoplasm"/>
    <property type="evidence" value="ECO:0007669"/>
    <property type="project" value="UniProtKB-UniRule"/>
</dbReference>
<dbReference type="GO" id="GO:0003690">
    <property type="term" value="F:double-stranded DNA binding"/>
    <property type="evidence" value="ECO:0007669"/>
    <property type="project" value="TreeGrafter"/>
</dbReference>
<dbReference type="GO" id="GO:0003727">
    <property type="term" value="F:single-stranded RNA binding"/>
    <property type="evidence" value="ECO:0007669"/>
    <property type="project" value="TreeGrafter"/>
</dbReference>
<dbReference type="HAMAP" id="MF_00730">
    <property type="entry name" value="NdpA"/>
    <property type="match status" value="1"/>
</dbReference>
<dbReference type="InterPro" id="IPR007358">
    <property type="entry name" value="Nucleoid_associated_NdpA"/>
</dbReference>
<dbReference type="NCBIfam" id="NF001557">
    <property type="entry name" value="PRK00378.1"/>
    <property type="match status" value="1"/>
</dbReference>
<dbReference type="PANTHER" id="PTHR38772">
    <property type="match status" value="1"/>
</dbReference>
<dbReference type="PANTHER" id="PTHR38772:SF1">
    <property type="entry name" value="NUCLEOID-ASSOCIATED PROTEIN YEJK"/>
    <property type="match status" value="1"/>
</dbReference>
<dbReference type="Pfam" id="PF04245">
    <property type="entry name" value="NA37"/>
    <property type="match status" value="1"/>
</dbReference>
<sequence>MSINIEHAIIHEISQDSQGQLRCRLRPQPLLNGQAVEVMLDELHQTYTGKAGKGFGYFGIHGDDGEANPAFANALTQYRGGDLGFVEFSGQASKLLQEELSKYDFSQGGFLLMSCYTSITSDYLFVALLSAKSSMTVLDDMELSQNNHLDLNNIQLAARIDLTEWQADKDSRKYISFIRGRAGRKVADFFLDFMGCVEGVNTKAQNKTLMNAVEDFVASSELTKDERQQCRNKVFEYCSERFDEGADIEIKDLADELADQGMDSFYDFARGGSYDLDEEFPADKSTLRQLKKFSGTGGGVTLSFDGGHLGQRVIYDPISDTILIKGVPANLKDQLDRRLKGE</sequence>
<protein>
    <recommendedName>
        <fullName evidence="1">Nucleoid-associated protein Sbal223_1817</fullName>
    </recommendedName>
</protein>
<comment type="subcellular location">
    <subcellularLocation>
        <location evidence="1">Cytoplasm</location>
        <location evidence="1">Nucleoid</location>
    </subcellularLocation>
</comment>
<comment type="similarity">
    <text evidence="1">Belongs to the YejK family.</text>
</comment>
<evidence type="ECO:0000255" key="1">
    <source>
        <dbReference type="HAMAP-Rule" id="MF_00730"/>
    </source>
</evidence>
<reference key="1">
    <citation type="submission" date="2008-12" db="EMBL/GenBank/DDBJ databases">
        <title>Complete sequence of chromosome of Shewanella baltica OS223.</title>
        <authorList>
            <consortium name="US DOE Joint Genome Institute"/>
            <person name="Lucas S."/>
            <person name="Copeland A."/>
            <person name="Lapidus A."/>
            <person name="Glavina del Rio T."/>
            <person name="Dalin E."/>
            <person name="Tice H."/>
            <person name="Bruce D."/>
            <person name="Goodwin L."/>
            <person name="Pitluck S."/>
            <person name="Chertkov O."/>
            <person name="Meincke L."/>
            <person name="Brettin T."/>
            <person name="Detter J.C."/>
            <person name="Han C."/>
            <person name="Kuske C.R."/>
            <person name="Larimer F."/>
            <person name="Land M."/>
            <person name="Hauser L."/>
            <person name="Kyrpides N."/>
            <person name="Ovchinnikova G."/>
            <person name="Brettar I."/>
            <person name="Rodrigues J."/>
            <person name="Konstantinidis K."/>
            <person name="Tiedje J."/>
        </authorList>
    </citation>
    <scope>NUCLEOTIDE SEQUENCE [LARGE SCALE GENOMIC DNA]</scope>
    <source>
        <strain>OS223</strain>
    </source>
</reference>
<name>NDPA_SHEB2</name>